<protein>
    <recommendedName>
        <fullName evidence="2">Nonsense-mediated mRNA decay factor SMG8</fullName>
    </recommendedName>
    <alternativeName>
        <fullName>Protein smg-8 homolog</fullName>
    </alternativeName>
</protein>
<feature type="chain" id="PRO_0000378180" description="Nonsense-mediated mRNA decay factor SMG8">
    <location>
        <begin position="1"/>
        <end position="962"/>
    </location>
</feature>
<feature type="region of interest" description="Disordered" evidence="3">
    <location>
        <begin position="634"/>
        <end position="661"/>
    </location>
</feature>
<feature type="compositionally biased region" description="Low complexity" evidence="3">
    <location>
        <begin position="639"/>
        <end position="661"/>
    </location>
</feature>
<evidence type="ECO:0000250" key="1"/>
<evidence type="ECO:0000250" key="2">
    <source>
        <dbReference type="UniProtKB" id="Q8ND04"/>
    </source>
</evidence>
<evidence type="ECO:0000256" key="3">
    <source>
        <dbReference type="SAM" id="MobiDB-lite"/>
    </source>
</evidence>
<evidence type="ECO:0000305" key="4"/>
<gene>
    <name type="ORF">GJ17645</name>
</gene>
<accession>B4LS82</accession>
<dbReference type="EMBL" id="CH940649">
    <property type="protein sequence ID" value="EDW64768.1"/>
    <property type="molecule type" value="Genomic_DNA"/>
</dbReference>
<dbReference type="RefSeq" id="XP_002052613.1">
    <property type="nucleotide sequence ID" value="XM_002052577.2"/>
</dbReference>
<dbReference type="SMR" id="B4LS82"/>
<dbReference type="FunCoup" id="B4LS82">
    <property type="interactions" value="2853"/>
</dbReference>
<dbReference type="STRING" id="7244.B4LS82"/>
<dbReference type="EnsemblMetazoa" id="FBtr0233570">
    <property type="protein sequence ID" value="FBpp0232062"/>
    <property type="gene ID" value="FBgn0204814"/>
</dbReference>
<dbReference type="EnsemblMetazoa" id="XM_032438131.1">
    <property type="protein sequence ID" value="XP_032294022.1"/>
    <property type="gene ID" value="LOC6629237"/>
</dbReference>
<dbReference type="eggNOG" id="KOG3692">
    <property type="taxonomic scope" value="Eukaryota"/>
</dbReference>
<dbReference type="HOGENOM" id="CLU_008116_0_0_1"/>
<dbReference type="InParanoid" id="B4LS82"/>
<dbReference type="OMA" id="HVCHIVV"/>
<dbReference type="OrthoDB" id="63589at2759"/>
<dbReference type="PhylomeDB" id="B4LS82"/>
<dbReference type="Proteomes" id="UP000008792">
    <property type="component" value="Unassembled WGS sequence"/>
</dbReference>
<dbReference type="GO" id="GO:0000184">
    <property type="term" value="P:nuclear-transcribed mRNA catabolic process, nonsense-mediated decay"/>
    <property type="evidence" value="ECO:0000250"/>
    <property type="project" value="UniProtKB"/>
</dbReference>
<dbReference type="InterPro" id="IPR019354">
    <property type="entry name" value="SMG8-like"/>
</dbReference>
<dbReference type="PANTHER" id="PTHR13091">
    <property type="entry name" value="AMPLIFIED IN BREAST CANCER 2-RELATED"/>
    <property type="match status" value="1"/>
</dbReference>
<dbReference type="PANTHER" id="PTHR13091:SF0">
    <property type="entry name" value="NONSENSE-MEDIATED MRNA DECAY FACTOR SMG8"/>
    <property type="match status" value="1"/>
</dbReference>
<dbReference type="Pfam" id="PF10220">
    <property type="entry name" value="Smg8_Smg9"/>
    <property type="match status" value="1"/>
</dbReference>
<reference key="1">
    <citation type="journal article" date="2007" name="Nature">
        <title>Evolution of genes and genomes on the Drosophila phylogeny.</title>
        <authorList>
            <consortium name="Drosophila 12 genomes consortium"/>
        </authorList>
    </citation>
    <scope>NUCLEOTIDE SEQUENCE [LARGE SCALE GENOMIC DNA]</scope>
    <source>
        <strain>Tucson 15010-1051.87</strain>
    </source>
</reference>
<comment type="function">
    <text evidence="1">Involved in nonsense-mediated decay (NMD) of mRNAs containing premature stop codons. Probable component of kinase complex containing nonC and recruited to stalled ribosomes (By similarity).</text>
</comment>
<comment type="similarity">
    <text evidence="4">Belongs to the SMG8 family.</text>
</comment>
<sequence>MSYKNYYTWKYPDIPEHVAPLLLELQNSLVIVGIIGRSKCAQANKMSAFGMQPDKTHEPADGQILCYYKPGTNMLLLHFETTHDEAVLGQQLLKQTSVDFDSFYEQMRSRFLRMLLLALHVCHILVYVETAQTFDTTLVTICQLLKYVREKHVLDFLPQMLRETAAGSLLSDRARLCTPRVLFLFENYPQDEEKSRERISAYEFQTEDKIYELLRQYNIVTNNANNSLFALPNNKQFVFYNAHEKLRPDQLLLAIEALNATMYKSDSKEEEEDTEILELAPFEGFVKPYGAGYEARESDEQLYRKKHTVWHFLQRHVQDALQGCFDEGSFKQLPQSAQFQLLGVNDWHICMDTIHRLLIGNIQEVSYVTNNQNYKAYLRDFNESLNYEKKFWGHLCDLGLKKGISAYKSSAPAIYGSVTHRQLLADAILAFEEEGRGPYAELALAKLSEICLRHWHDGRQQCEQLSLRGNPCTQPKDAPHDKHSSGIVHISSCNCGRTQGRREDPFTLRQANYDYYEHMAAMCNLCVKVKKFQLPVFTPSISDYRAAAFEAAFPLLLQAAKNRTEIATGGDSDLEAAGELYSQPINATEQAPQKPQITLSNGCSQPALSATYGSDLNMSIAGFGASLNEGEEVRSPEISSQIASSGLSSRSNSTSSGTSSANTANELVLQLKERTDQNAANAAVSEICPEALPIVASTEQVSTTEYLPGLVHMSSGCELLPLFPSWSLACVGPSSIYSHNTGLQEHFQSGFLSGANFLLPWDVHVRLVQPHKHPQQQQQSMGKKSQRYRKHGDRLALKIFVGFEYECSRGHRFMMCSPDRVLRGGADIERDTSSKVVNNNMPLYFPCPCRAQPTYLAQLMRIHVVTPKAPVNIILDPKMCVGKYTFTLGCPTLPRLSQSAYWILRLPYVYQGDNVLITPPERLEPDDNMASGCLLAGMFGIAETDTNETNQQAITPLTFTRL</sequence>
<proteinExistence type="inferred from homology"/>
<keyword id="KW-0866">Nonsense-mediated mRNA decay</keyword>
<keyword id="KW-1185">Reference proteome</keyword>
<name>SMG8_DROVI</name>
<organism>
    <name type="scientific">Drosophila virilis</name>
    <name type="common">Fruit fly</name>
    <dbReference type="NCBI Taxonomy" id="7244"/>
    <lineage>
        <taxon>Eukaryota</taxon>
        <taxon>Metazoa</taxon>
        <taxon>Ecdysozoa</taxon>
        <taxon>Arthropoda</taxon>
        <taxon>Hexapoda</taxon>
        <taxon>Insecta</taxon>
        <taxon>Pterygota</taxon>
        <taxon>Neoptera</taxon>
        <taxon>Endopterygota</taxon>
        <taxon>Diptera</taxon>
        <taxon>Brachycera</taxon>
        <taxon>Muscomorpha</taxon>
        <taxon>Ephydroidea</taxon>
        <taxon>Drosophilidae</taxon>
        <taxon>Drosophila</taxon>
    </lineage>
</organism>